<protein>
    <recommendedName>
        <fullName>Putative uncharacterized protein YLR076C</fullName>
    </recommendedName>
</protein>
<comment type="miscellaneous">
    <text evidence="1">Almost completely overlaps RPL10.</text>
</comment>
<comment type="caution">
    <text evidence="2">Product of a dubious gene prediction unlikely to encode a functional protein. Because of that it is not part of the S.cerevisiae S288c complete/reference proteome set.</text>
</comment>
<name>YL076_YEAST</name>
<gene>
    <name type="ordered locus">YLR076C</name>
    <name type="ORF">L2345</name>
</gene>
<dbReference type="EMBL" id="Z73247">
    <property type="protein sequence ID" value="CAA97633.1"/>
    <property type="molecule type" value="Genomic_DNA"/>
</dbReference>
<dbReference type="PIR" id="S64908">
    <property type="entry name" value="S64908"/>
</dbReference>
<dbReference type="DIP" id="DIP-2813N"/>
<dbReference type="IntAct" id="Q08018">
    <property type="interactions" value="4"/>
</dbReference>
<dbReference type="MINT" id="Q08018"/>
<dbReference type="STRING" id="4932.YLR076C"/>
<dbReference type="PaxDb" id="4932-YLR076C"/>
<dbReference type="EnsemblFungi" id="YLR076C_mRNA">
    <property type="protein sequence ID" value="YLR076C"/>
    <property type="gene ID" value="YLR076C"/>
</dbReference>
<dbReference type="AGR" id="SGD:S000004066"/>
<dbReference type="SGD" id="S000004066">
    <property type="gene designation" value="YLR076C"/>
</dbReference>
<dbReference type="HOGENOM" id="CLU_1836686_0_0_1"/>
<dbReference type="ChiTaRS" id="YLR076C">
    <property type="organism name" value="yeast"/>
</dbReference>
<accession>Q08018</accession>
<proteinExistence type="uncertain"/>
<reference key="1">
    <citation type="journal article" date="1997" name="Nature">
        <title>The nucleotide sequence of Saccharomyces cerevisiae chromosome XII.</title>
        <authorList>
            <person name="Johnston M."/>
            <person name="Hillier L.W."/>
            <person name="Riles L."/>
            <person name="Albermann K."/>
            <person name="Andre B."/>
            <person name="Ansorge W."/>
            <person name="Benes V."/>
            <person name="Brueckner M."/>
            <person name="Delius H."/>
            <person name="Dubois E."/>
            <person name="Duesterhoeft A."/>
            <person name="Entian K.-D."/>
            <person name="Floeth M."/>
            <person name="Goffeau A."/>
            <person name="Hebling U."/>
            <person name="Heumann K."/>
            <person name="Heuss-Neitzel D."/>
            <person name="Hilbert H."/>
            <person name="Hilger F."/>
            <person name="Kleine K."/>
            <person name="Koetter P."/>
            <person name="Louis E.J."/>
            <person name="Messenguy F."/>
            <person name="Mewes H.-W."/>
            <person name="Miosga T."/>
            <person name="Moestl D."/>
            <person name="Mueller-Auer S."/>
            <person name="Nentwich U."/>
            <person name="Obermaier B."/>
            <person name="Piravandi E."/>
            <person name="Pohl T.M."/>
            <person name="Portetelle D."/>
            <person name="Purnelle B."/>
            <person name="Rechmann S."/>
            <person name="Rieger M."/>
            <person name="Rinke M."/>
            <person name="Rose M."/>
            <person name="Scharfe M."/>
            <person name="Scherens B."/>
            <person name="Scholler P."/>
            <person name="Schwager C."/>
            <person name="Schwarz S."/>
            <person name="Underwood A.P."/>
            <person name="Urrestarazu L.A."/>
            <person name="Vandenbol M."/>
            <person name="Verhasselt P."/>
            <person name="Vierendeels F."/>
            <person name="Voet M."/>
            <person name="Volckaert G."/>
            <person name="Voss H."/>
            <person name="Wambutt R."/>
            <person name="Wedler E."/>
            <person name="Wedler H."/>
            <person name="Zimmermann F.K."/>
            <person name="Zollner A."/>
            <person name="Hani J."/>
            <person name="Hoheisel J.D."/>
        </authorList>
    </citation>
    <scope>NUCLEOTIDE SEQUENCE [LARGE SCALE GENOMIC DNA]</scope>
    <source>
        <strain>ATCC 204508 / S288c</strain>
    </source>
</reference>
<reference key="2">
    <citation type="journal article" date="2014" name="G3 (Bethesda)">
        <title>The reference genome sequence of Saccharomyces cerevisiae: Then and now.</title>
        <authorList>
            <person name="Engel S.R."/>
            <person name="Dietrich F.S."/>
            <person name="Fisk D.G."/>
            <person name="Binkley G."/>
            <person name="Balakrishnan R."/>
            <person name="Costanzo M.C."/>
            <person name="Dwight S.S."/>
            <person name="Hitz B.C."/>
            <person name="Karra K."/>
            <person name="Nash R.S."/>
            <person name="Weng S."/>
            <person name="Wong E.D."/>
            <person name="Lloyd P."/>
            <person name="Skrzypek M.S."/>
            <person name="Miyasato S.R."/>
            <person name="Simison M."/>
            <person name="Cherry J.M."/>
        </authorList>
    </citation>
    <scope>GENOME REANNOTATION</scope>
    <source>
        <strain>ATCC 204508 / S288c</strain>
    </source>
</reference>
<sequence length="140" mass="15848">MFEKNLSLSSKVFWEFSDVVFQRTLLGQELNESTVVLDFTSFSLLQVFWSVQVGETPLLRQNNLLLTWELVSGSSQTFNDNILVAVLGSDREDNLTNVDTSGQTVWLTPSTSHTLLQSIRTGTRQHLVDSQDMERMDSDS</sequence>
<feature type="chain" id="PRO_0000299609" description="Putative uncharacterized protein YLR076C">
    <location>
        <begin position="1"/>
        <end position="140"/>
    </location>
</feature>
<evidence type="ECO:0000305" key="1"/>
<evidence type="ECO:0000305" key="2">
    <source>
    </source>
</evidence>
<organism>
    <name type="scientific">Saccharomyces cerevisiae (strain ATCC 204508 / S288c)</name>
    <name type="common">Baker's yeast</name>
    <dbReference type="NCBI Taxonomy" id="559292"/>
    <lineage>
        <taxon>Eukaryota</taxon>
        <taxon>Fungi</taxon>
        <taxon>Dikarya</taxon>
        <taxon>Ascomycota</taxon>
        <taxon>Saccharomycotina</taxon>
        <taxon>Saccharomycetes</taxon>
        <taxon>Saccharomycetales</taxon>
        <taxon>Saccharomycetaceae</taxon>
        <taxon>Saccharomyces</taxon>
    </lineage>
</organism>